<keyword id="KW-0963">Cytoplasm</keyword>
<keyword id="KW-0479">Metal-binding</keyword>
<keyword id="KW-0520">NAD</keyword>
<keyword id="KW-1185">Reference proteome</keyword>
<keyword id="KW-0808">Transferase</keyword>
<keyword id="KW-0862">Zinc</keyword>
<feature type="chain" id="PRO_0000110338" description="NAD-dependent protein deacylase">
    <location>
        <begin position="1"/>
        <end position="262"/>
    </location>
</feature>
<feature type="domain" description="Deacetylase sirtuin-type" evidence="2">
    <location>
        <begin position="1"/>
        <end position="262"/>
    </location>
</feature>
<feature type="active site" description="Proton acceptor" evidence="2">
    <location>
        <position position="119"/>
    </location>
</feature>
<feature type="binding site" evidence="1">
    <location>
        <begin position="22"/>
        <end position="42"/>
    </location>
    <ligand>
        <name>NAD(+)</name>
        <dbReference type="ChEBI" id="CHEBI:57540"/>
    </ligand>
</feature>
<feature type="binding site" evidence="1">
    <location>
        <position position="67"/>
    </location>
    <ligand>
        <name>substrate</name>
    </ligand>
</feature>
<feature type="binding site" evidence="1">
    <location>
        <position position="70"/>
    </location>
    <ligand>
        <name>substrate</name>
    </ligand>
</feature>
<feature type="binding site" evidence="1">
    <location>
        <begin position="101"/>
        <end position="104"/>
    </location>
    <ligand>
        <name>NAD(+)</name>
        <dbReference type="ChEBI" id="CHEBI:57540"/>
    </ligand>
</feature>
<feature type="binding site" evidence="1">
    <location>
        <position position="127"/>
    </location>
    <ligand>
        <name>Zn(2+)</name>
        <dbReference type="ChEBI" id="CHEBI:29105"/>
    </ligand>
</feature>
<feature type="binding site" evidence="1">
    <location>
        <position position="130"/>
    </location>
    <ligand>
        <name>Zn(2+)</name>
        <dbReference type="ChEBI" id="CHEBI:29105"/>
    </ligand>
</feature>
<feature type="binding site" evidence="1">
    <location>
        <position position="155"/>
    </location>
    <ligand>
        <name>Zn(2+)</name>
        <dbReference type="ChEBI" id="CHEBI:29105"/>
    </ligand>
</feature>
<feature type="binding site" evidence="1">
    <location>
        <position position="158"/>
    </location>
    <ligand>
        <name>Zn(2+)</name>
        <dbReference type="ChEBI" id="CHEBI:29105"/>
    </ligand>
</feature>
<feature type="binding site" evidence="1">
    <location>
        <begin position="195"/>
        <end position="197"/>
    </location>
    <ligand>
        <name>NAD(+)</name>
        <dbReference type="ChEBI" id="CHEBI:57540"/>
    </ligand>
</feature>
<feature type="binding site" evidence="1">
    <location>
        <begin position="221"/>
        <end position="223"/>
    </location>
    <ligand>
        <name>NAD(+)</name>
        <dbReference type="ChEBI" id="CHEBI:57540"/>
    </ligand>
</feature>
<feature type="binding site" evidence="1">
    <location>
        <position position="239"/>
    </location>
    <ligand>
        <name>NAD(+)</name>
        <dbReference type="ChEBI" id="CHEBI:57540"/>
    </ligand>
</feature>
<comment type="function">
    <text evidence="1">NAD-dependent lysine deacetylase and desuccinylase that specifically removes acetyl and succinyl groups on target proteins. Modulates the activities of several proteins which are inactive in their acylated form.</text>
</comment>
<comment type="catalytic activity">
    <reaction evidence="1">
        <text>N(6)-acetyl-L-lysyl-[protein] + NAD(+) + H2O = 2''-O-acetyl-ADP-D-ribose + nicotinamide + L-lysyl-[protein]</text>
        <dbReference type="Rhea" id="RHEA:43636"/>
        <dbReference type="Rhea" id="RHEA-COMP:9752"/>
        <dbReference type="Rhea" id="RHEA-COMP:10731"/>
        <dbReference type="ChEBI" id="CHEBI:15377"/>
        <dbReference type="ChEBI" id="CHEBI:17154"/>
        <dbReference type="ChEBI" id="CHEBI:29969"/>
        <dbReference type="ChEBI" id="CHEBI:57540"/>
        <dbReference type="ChEBI" id="CHEBI:61930"/>
        <dbReference type="ChEBI" id="CHEBI:83767"/>
        <dbReference type="EC" id="2.3.1.286"/>
    </reaction>
</comment>
<comment type="catalytic activity">
    <reaction evidence="1">
        <text>N(6)-succinyl-L-lysyl-[protein] + NAD(+) + H2O = 2''-O-succinyl-ADP-D-ribose + nicotinamide + L-lysyl-[protein]</text>
        <dbReference type="Rhea" id="RHEA:47668"/>
        <dbReference type="Rhea" id="RHEA-COMP:9752"/>
        <dbReference type="Rhea" id="RHEA-COMP:11877"/>
        <dbReference type="ChEBI" id="CHEBI:15377"/>
        <dbReference type="ChEBI" id="CHEBI:17154"/>
        <dbReference type="ChEBI" id="CHEBI:29969"/>
        <dbReference type="ChEBI" id="CHEBI:57540"/>
        <dbReference type="ChEBI" id="CHEBI:87830"/>
        <dbReference type="ChEBI" id="CHEBI:87832"/>
    </reaction>
</comment>
<comment type="cofactor">
    <cofactor evidence="1">
        <name>Zn(2+)</name>
        <dbReference type="ChEBI" id="CHEBI:29105"/>
    </cofactor>
    <text evidence="1">Binds 1 zinc ion per subunit.</text>
</comment>
<comment type="subcellular location">
    <subcellularLocation>
        <location evidence="1">Cytoplasm</location>
    </subcellularLocation>
</comment>
<comment type="domain">
    <text evidence="1">2 residues (Tyr-67 and Arg-70) present in a large hydrophobic pocket are probably involved in substrate specificity. They are important for desuccinylation activity, but dispensable for deacetylation activity.</text>
</comment>
<comment type="similarity">
    <text evidence="1">Belongs to the sirtuin family. Class III subfamily.</text>
</comment>
<sequence>MSNLRRAAEALRRSKTVVFFTGAGISADSGIPTFRDKLTGLWAKHDPQRLETADAFRANPTLVWSWYLWRRHQVSQAKPNSAHLSIPQLADAGWDVSVVTQNIDDLHERAGSSPVVHLHGSLMDVKCFGCHRPAELSPDQLAVPLEGQLIEPPRCTRCNGRLRPGVVWFRENLPDNAWRSAVRLVRACDLLVSVGTSGVVMPAAGIPDMALAVGATVIHVNLEDVGMDGADEIMLEGPAGVVLPALLQATGVAALSPPGVPT</sequence>
<reference key="1">
    <citation type="journal article" date="2002" name="Environ. Microbiol.">
        <title>Complete genome sequence and comparative analysis of the metabolically versatile Pseudomonas putida KT2440.</title>
        <authorList>
            <person name="Nelson K.E."/>
            <person name="Weinel C."/>
            <person name="Paulsen I.T."/>
            <person name="Dodson R.J."/>
            <person name="Hilbert H."/>
            <person name="Martins dos Santos V.A.P."/>
            <person name="Fouts D.E."/>
            <person name="Gill S.R."/>
            <person name="Pop M."/>
            <person name="Holmes M."/>
            <person name="Brinkac L.M."/>
            <person name="Beanan M.J."/>
            <person name="DeBoy R.T."/>
            <person name="Daugherty S.C."/>
            <person name="Kolonay J.F."/>
            <person name="Madupu R."/>
            <person name="Nelson W.C."/>
            <person name="White O."/>
            <person name="Peterson J.D."/>
            <person name="Khouri H.M."/>
            <person name="Hance I."/>
            <person name="Chris Lee P."/>
            <person name="Holtzapple E.K."/>
            <person name="Scanlan D."/>
            <person name="Tran K."/>
            <person name="Moazzez A."/>
            <person name="Utterback T.R."/>
            <person name="Rizzo M."/>
            <person name="Lee K."/>
            <person name="Kosack D."/>
            <person name="Moestl D."/>
            <person name="Wedler H."/>
            <person name="Lauber J."/>
            <person name="Stjepandic D."/>
            <person name="Hoheisel J."/>
            <person name="Straetz M."/>
            <person name="Heim S."/>
            <person name="Kiewitz C."/>
            <person name="Eisen J.A."/>
            <person name="Timmis K.N."/>
            <person name="Duesterhoeft A."/>
            <person name="Tuemmler B."/>
            <person name="Fraser C.M."/>
        </authorList>
    </citation>
    <scope>NUCLEOTIDE SEQUENCE [LARGE SCALE GENOMIC DNA]</scope>
    <source>
        <strain>ATCC 47054 / DSM 6125 / CFBP 8728 / NCIMB 11950 / KT2440</strain>
    </source>
</reference>
<name>NPD_PSEPK</name>
<evidence type="ECO:0000255" key="1">
    <source>
        <dbReference type="HAMAP-Rule" id="MF_01121"/>
    </source>
</evidence>
<evidence type="ECO:0000255" key="2">
    <source>
        <dbReference type="PROSITE-ProRule" id="PRU00236"/>
    </source>
</evidence>
<protein>
    <recommendedName>
        <fullName evidence="1">NAD-dependent protein deacylase</fullName>
        <ecNumber evidence="1 2">2.3.1.286</ecNumber>
    </recommendedName>
    <alternativeName>
        <fullName evidence="1">Regulatory protein SIR2 homolog</fullName>
    </alternativeName>
</protein>
<dbReference type="EC" id="2.3.1.286" evidence="1 2"/>
<dbReference type="EMBL" id="AE015451">
    <property type="protein sequence ID" value="AAN70966.1"/>
    <property type="molecule type" value="Genomic_DNA"/>
</dbReference>
<dbReference type="RefSeq" id="NP_747502.1">
    <property type="nucleotide sequence ID" value="NC_002947.4"/>
</dbReference>
<dbReference type="RefSeq" id="WP_010955877.1">
    <property type="nucleotide sequence ID" value="NZ_CP169744.1"/>
</dbReference>
<dbReference type="SMR" id="Q88BY5"/>
<dbReference type="STRING" id="160488.PP_5402"/>
<dbReference type="PaxDb" id="160488-PP_5402"/>
<dbReference type="KEGG" id="ppu:PP_5402"/>
<dbReference type="eggNOG" id="COG0846">
    <property type="taxonomic scope" value="Bacteria"/>
</dbReference>
<dbReference type="HOGENOM" id="CLU_023643_3_1_6"/>
<dbReference type="OrthoDB" id="9800582at2"/>
<dbReference type="PhylomeDB" id="Q88BY5"/>
<dbReference type="BioCyc" id="PPUT160488:G1G01-5766-MONOMER"/>
<dbReference type="Proteomes" id="UP000000556">
    <property type="component" value="Chromosome"/>
</dbReference>
<dbReference type="GO" id="GO:0005737">
    <property type="term" value="C:cytoplasm"/>
    <property type="evidence" value="ECO:0007669"/>
    <property type="project" value="UniProtKB-SubCell"/>
</dbReference>
<dbReference type="GO" id="GO:0017136">
    <property type="term" value="F:histone deacetylase activity, NAD-dependent"/>
    <property type="evidence" value="ECO:0007669"/>
    <property type="project" value="TreeGrafter"/>
</dbReference>
<dbReference type="GO" id="GO:0070403">
    <property type="term" value="F:NAD+ binding"/>
    <property type="evidence" value="ECO:0007669"/>
    <property type="project" value="UniProtKB-UniRule"/>
</dbReference>
<dbReference type="GO" id="GO:0036054">
    <property type="term" value="F:protein-malonyllysine demalonylase activity"/>
    <property type="evidence" value="ECO:0007669"/>
    <property type="project" value="InterPro"/>
</dbReference>
<dbReference type="GO" id="GO:0036055">
    <property type="term" value="F:protein-succinyllysine desuccinylase activity"/>
    <property type="evidence" value="ECO:0007669"/>
    <property type="project" value="UniProtKB-UniRule"/>
</dbReference>
<dbReference type="GO" id="GO:0008270">
    <property type="term" value="F:zinc ion binding"/>
    <property type="evidence" value="ECO:0007669"/>
    <property type="project" value="UniProtKB-UniRule"/>
</dbReference>
<dbReference type="CDD" id="cd01412">
    <property type="entry name" value="SIRT5_Af1_CobB"/>
    <property type="match status" value="1"/>
</dbReference>
<dbReference type="Gene3D" id="3.30.1600.10">
    <property type="entry name" value="SIR2/SIRT2 'Small Domain"/>
    <property type="match status" value="1"/>
</dbReference>
<dbReference type="Gene3D" id="3.40.50.1220">
    <property type="entry name" value="TPP-binding domain"/>
    <property type="match status" value="1"/>
</dbReference>
<dbReference type="HAMAP" id="MF_01121">
    <property type="entry name" value="Sirtuin_ClassIII"/>
    <property type="match status" value="1"/>
</dbReference>
<dbReference type="InterPro" id="IPR029035">
    <property type="entry name" value="DHS-like_NAD/FAD-binding_dom"/>
</dbReference>
<dbReference type="InterPro" id="IPR050134">
    <property type="entry name" value="NAD-dep_sirtuin_deacylases"/>
</dbReference>
<dbReference type="InterPro" id="IPR003000">
    <property type="entry name" value="Sirtuin"/>
</dbReference>
<dbReference type="InterPro" id="IPR026591">
    <property type="entry name" value="Sirtuin_cat_small_dom_sf"/>
</dbReference>
<dbReference type="InterPro" id="IPR027546">
    <property type="entry name" value="Sirtuin_class_III"/>
</dbReference>
<dbReference type="InterPro" id="IPR026590">
    <property type="entry name" value="Ssirtuin_cat_dom"/>
</dbReference>
<dbReference type="NCBIfam" id="NF001753">
    <property type="entry name" value="PRK00481.1-3"/>
    <property type="match status" value="1"/>
</dbReference>
<dbReference type="PANTHER" id="PTHR11085">
    <property type="entry name" value="NAD-DEPENDENT PROTEIN DEACYLASE SIRTUIN-5, MITOCHONDRIAL-RELATED"/>
    <property type="match status" value="1"/>
</dbReference>
<dbReference type="PANTHER" id="PTHR11085:SF10">
    <property type="entry name" value="NAD-DEPENDENT PROTEIN DEACYLASE SIRTUIN-5, MITOCHONDRIAL-RELATED"/>
    <property type="match status" value="1"/>
</dbReference>
<dbReference type="Pfam" id="PF02146">
    <property type="entry name" value="SIR2"/>
    <property type="match status" value="1"/>
</dbReference>
<dbReference type="SUPFAM" id="SSF52467">
    <property type="entry name" value="DHS-like NAD/FAD-binding domain"/>
    <property type="match status" value="1"/>
</dbReference>
<dbReference type="PROSITE" id="PS50305">
    <property type="entry name" value="SIRTUIN"/>
    <property type="match status" value="1"/>
</dbReference>
<gene>
    <name evidence="1" type="primary">cobB</name>
    <name type="ordered locus">PP_5402</name>
</gene>
<accession>Q88BY5</accession>
<organism>
    <name type="scientific">Pseudomonas putida (strain ATCC 47054 / DSM 6125 / CFBP 8728 / NCIMB 11950 / KT2440)</name>
    <dbReference type="NCBI Taxonomy" id="160488"/>
    <lineage>
        <taxon>Bacteria</taxon>
        <taxon>Pseudomonadati</taxon>
        <taxon>Pseudomonadota</taxon>
        <taxon>Gammaproteobacteria</taxon>
        <taxon>Pseudomonadales</taxon>
        <taxon>Pseudomonadaceae</taxon>
        <taxon>Pseudomonas</taxon>
    </lineage>
</organism>
<proteinExistence type="inferred from homology"/>